<evidence type="ECO:0000255" key="1">
    <source>
        <dbReference type="HAMAP-Rule" id="MF_00600"/>
    </source>
</evidence>
<evidence type="ECO:0000256" key="2">
    <source>
        <dbReference type="SAM" id="MobiDB-lite"/>
    </source>
</evidence>
<comment type="function">
    <text evidence="1">Together with its co-chaperonin GroES, plays an essential role in assisting protein folding. The GroEL-GroES system forms a nano-cage that allows encapsulation of the non-native substrate proteins and provides a physical environment optimized to promote and accelerate protein folding.</text>
</comment>
<comment type="catalytic activity">
    <reaction evidence="1">
        <text>ATP + H2O + a folded polypeptide = ADP + phosphate + an unfolded polypeptide.</text>
        <dbReference type="EC" id="5.6.1.7"/>
    </reaction>
</comment>
<comment type="subunit">
    <text evidence="1">Forms a cylinder of 14 subunits composed of two heptameric rings stacked back-to-back. Interacts with the co-chaperonin GroES.</text>
</comment>
<comment type="subcellular location">
    <subcellularLocation>
        <location evidence="1">Cytoplasm</location>
    </subcellularLocation>
</comment>
<comment type="similarity">
    <text evidence="1">Belongs to the chaperonin (HSP60) family.</text>
</comment>
<dbReference type="EC" id="5.6.1.7" evidence="1"/>
<dbReference type="EMBL" id="AE005673">
    <property type="protein sequence ID" value="AAK22670.1"/>
    <property type="molecule type" value="Genomic_DNA"/>
</dbReference>
<dbReference type="PIR" id="B87334">
    <property type="entry name" value="B87334"/>
</dbReference>
<dbReference type="RefSeq" id="NP_419502.1">
    <property type="nucleotide sequence ID" value="NC_002696.2"/>
</dbReference>
<dbReference type="RefSeq" id="WP_010918571.1">
    <property type="nucleotide sequence ID" value="NC_002696.2"/>
</dbReference>
<dbReference type="SMR" id="P0CAT9"/>
<dbReference type="STRING" id="190650.CC_0685"/>
<dbReference type="EnsemblBacteria" id="AAK22670">
    <property type="protein sequence ID" value="AAK22670"/>
    <property type="gene ID" value="CC_0685"/>
</dbReference>
<dbReference type="KEGG" id="ccr:CC_0685"/>
<dbReference type="PATRIC" id="fig|190650.5.peg.694"/>
<dbReference type="eggNOG" id="COG0459">
    <property type="taxonomic scope" value="Bacteria"/>
</dbReference>
<dbReference type="HOGENOM" id="CLU_016503_3_0_5"/>
<dbReference type="BioCyc" id="CAULO:CC0685-MONOMER"/>
<dbReference type="Proteomes" id="UP000001816">
    <property type="component" value="Chromosome"/>
</dbReference>
<dbReference type="GO" id="GO:0005737">
    <property type="term" value="C:cytoplasm"/>
    <property type="evidence" value="ECO:0007669"/>
    <property type="project" value="UniProtKB-SubCell"/>
</dbReference>
<dbReference type="GO" id="GO:0005524">
    <property type="term" value="F:ATP binding"/>
    <property type="evidence" value="ECO:0007669"/>
    <property type="project" value="UniProtKB-UniRule"/>
</dbReference>
<dbReference type="GO" id="GO:0140662">
    <property type="term" value="F:ATP-dependent protein folding chaperone"/>
    <property type="evidence" value="ECO:0007669"/>
    <property type="project" value="InterPro"/>
</dbReference>
<dbReference type="GO" id="GO:0016853">
    <property type="term" value="F:isomerase activity"/>
    <property type="evidence" value="ECO:0007669"/>
    <property type="project" value="UniProtKB-KW"/>
</dbReference>
<dbReference type="GO" id="GO:0051082">
    <property type="term" value="F:unfolded protein binding"/>
    <property type="evidence" value="ECO:0007669"/>
    <property type="project" value="UniProtKB-UniRule"/>
</dbReference>
<dbReference type="GO" id="GO:0042026">
    <property type="term" value="P:protein refolding"/>
    <property type="evidence" value="ECO:0007669"/>
    <property type="project" value="UniProtKB-UniRule"/>
</dbReference>
<dbReference type="CDD" id="cd03344">
    <property type="entry name" value="GroEL"/>
    <property type="match status" value="1"/>
</dbReference>
<dbReference type="FunFam" id="1.10.560.10:FF:000001">
    <property type="entry name" value="60 kDa chaperonin"/>
    <property type="match status" value="1"/>
</dbReference>
<dbReference type="FunFam" id="3.50.7.10:FF:000001">
    <property type="entry name" value="60 kDa chaperonin"/>
    <property type="match status" value="1"/>
</dbReference>
<dbReference type="Gene3D" id="3.50.7.10">
    <property type="entry name" value="GroEL"/>
    <property type="match status" value="1"/>
</dbReference>
<dbReference type="Gene3D" id="1.10.560.10">
    <property type="entry name" value="GroEL-like equatorial domain"/>
    <property type="match status" value="1"/>
</dbReference>
<dbReference type="Gene3D" id="3.30.260.10">
    <property type="entry name" value="TCP-1-like chaperonin intermediate domain"/>
    <property type="match status" value="1"/>
</dbReference>
<dbReference type="HAMAP" id="MF_00600">
    <property type="entry name" value="CH60"/>
    <property type="match status" value="1"/>
</dbReference>
<dbReference type="InterPro" id="IPR018370">
    <property type="entry name" value="Chaperonin_Cpn60_CS"/>
</dbReference>
<dbReference type="InterPro" id="IPR001844">
    <property type="entry name" value="Cpn60/GroEL"/>
</dbReference>
<dbReference type="InterPro" id="IPR002423">
    <property type="entry name" value="Cpn60/GroEL/TCP-1"/>
</dbReference>
<dbReference type="InterPro" id="IPR027409">
    <property type="entry name" value="GroEL-like_apical_dom_sf"/>
</dbReference>
<dbReference type="InterPro" id="IPR027413">
    <property type="entry name" value="GROEL-like_equatorial_sf"/>
</dbReference>
<dbReference type="InterPro" id="IPR027410">
    <property type="entry name" value="TCP-1-like_intermed_sf"/>
</dbReference>
<dbReference type="NCBIfam" id="TIGR02348">
    <property type="entry name" value="GroEL"/>
    <property type="match status" value="1"/>
</dbReference>
<dbReference type="NCBIfam" id="NF000592">
    <property type="entry name" value="PRK00013.1"/>
    <property type="match status" value="1"/>
</dbReference>
<dbReference type="NCBIfam" id="NF009487">
    <property type="entry name" value="PRK12849.1"/>
    <property type="match status" value="1"/>
</dbReference>
<dbReference type="NCBIfam" id="NF009488">
    <property type="entry name" value="PRK12850.1"/>
    <property type="match status" value="1"/>
</dbReference>
<dbReference type="NCBIfam" id="NF009489">
    <property type="entry name" value="PRK12851.1"/>
    <property type="match status" value="1"/>
</dbReference>
<dbReference type="PANTHER" id="PTHR45633">
    <property type="entry name" value="60 KDA HEAT SHOCK PROTEIN, MITOCHONDRIAL"/>
    <property type="match status" value="1"/>
</dbReference>
<dbReference type="Pfam" id="PF00118">
    <property type="entry name" value="Cpn60_TCP1"/>
    <property type="match status" value="1"/>
</dbReference>
<dbReference type="PRINTS" id="PR00298">
    <property type="entry name" value="CHAPERONIN60"/>
</dbReference>
<dbReference type="SUPFAM" id="SSF52029">
    <property type="entry name" value="GroEL apical domain-like"/>
    <property type="match status" value="1"/>
</dbReference>
<dbReference type="SUPFAM" id="SSF48592">
    <property type="entry name" value="GroEL equatorial domain-like"/>
    <property type="match status" value="1"/>
</dbReference>
<dbReference type="SUPFAM" id="SSF54849">
    <property type="entry name" value="GroEL-intermediate domain like"/>
    <property type="match status" value="1"/>
</dbReference>
<dbReference type="PROSITE" id="PS00296">
    <property type="entry name" value="CHAPERONINS_CPN60"/>
    <property type="match status" value="1"/>
</dbReference>
<name>CH60_CAUVC</name>
<sequence length="547" mass="57397">MAAKDVYFSSDARDKMLRGVNILANAVKVTLGPKGRNVVIEKSFGAPRTTKDGVSVAKEIELADKFENLGAQMIREVASKTNDKAGDGTTTATVLAQAIVQEGLKSVAAGMNPMDLKRGIDKAVAIAIEDIKTSSKKVTTNAEIAQVGTISANGDKEVGEMIAKAMDKVGNEGVITVEEAKTAETELDVVEGMQFDRGYLSPYFITNADKMEVQLEEPLILLFEKKLSSLQPLLPVLEAVVQSGRPLLIIAEDVEGEALATLVVNKLRGGLRVAAVKAPGFGDRRKAMLEDIAILTGAQVVSEDIGIKLENVSLEMLGRAKKVSITKDDTTIVDGVGEKADIEARIAQIKRQIEDTTSDYDKEKLQERLAKLAGGVAVIRVGGSTEVEVKEKKDRVDDALNATRAAADEGIVPGGGTALLKASKALAGVVGDNDDQTAGIAIVRRALQAPIRQIAENAGVEGSIVVGKILENDNSAFGFNAQTEQYVDLVVDGVIDPAKVVRTALQNAASVAGLLITTEAAIVEAPKKGGGAPAGGGMPGGMGDMDF</sequence>
<accession>P0CAT9</accession>
<accession>P48211</accession>
<feature type="chain" id="PRO_0000063326" description="Chaperonin GroEL">
    <location>
        <begin position="1"/>
        <end position="547"/>
    </location>
</feature>
<feature type="region of interest" description="Disordered" evidence="2">
    <location>
        <begin position="528"/>
        <end position="547"/>
    </location>
</feature>
<feature type="binding site" evidence="1">
    <location>
        <begin position="30"/>
        <end position="33"/>
    </location>
    <ligand>
        <name>ATP</name>
        <dbReference type="ChEBI" id="CHEBI:30616"/>
    </ligand>
</feature>
<feature type="binding site" evidence="1">
    <location>
        <position position="51"/>
    </location>
    <ligand>
        <name>ATP</name>
        <dbReference type="ChEBI" id="CHEBI:30616"/>
    </ligand>
</feature>
<feature type="binding site" evidence="1">
    <location>
        <begin position="87"/>
        <end position="91"/>
    </location>
    <ligand>
        <name>ATP</name>
        <dbReference type="ChEBI" id="CHEBI:30616"/>
    </ligand>
</feature>
<feature type="binding site" evidence="1">
    <location>
        <position position="415"/>
    </location>
    <ligand>
        <name>ATP</name>
        <dbReference type="ChEBI" id="CHEBI:30616"/>
    </ligand>
</feature>
<feature type="binding site" evidence="1">
    <location>
        <position position="496"/>
    </location>
    <ligand>
        <name>ATP</name>
        <dbReference type="ChEBI" id="CHEBI:30616"/>
    </ligand>
</feature>
<proteinExistence type="inferred from homology"/>
<gene>
    <name evidence="1" type="primary">groEL</name>
    <name evidence="1" type="synonym">groL</name>
    <name type="synonym">mopA</name>
    <name type="ordered locus">CC_0685</name>
</gene>
<protein>
    <recommendedName>
        <fullName evidence="1">Chaperonin GroEL</fullName>
        <ecNumber evidence="1">5.6.1.7</ecNumber>
    </recommendedName>
    <alternativeName>
        <fullName evidence="1">60 kDa chaperonin</fullName>
    </alternativeName>
    <alternativeName>
        <fullName evidence="1">Chaperonin-60</fullName>
        <shortName evidence="1">Cpn60</shortName>
    </alternativeName>
</protein>
<keyword id="KW-0067">ATP-binding</keyword>
<keyword id="KW-0143">Chaperone</keyword>
<keyword id="KW-0963">Cytoplasm</keyword>
<keyword id="KW-0413">Isomerase</keyword>
<keyword id="KW-0547">Nucleotide-binding</keyword>
<keyword id="KW-1185">Reference proteome</keyword>
<reference key="1">
    <citation type="journal article" date="2001" name="Proc. Natl. Acad. Sci. U.S.A.">
        <title>Complete genome sequence of Caulobacter crescentus.</title>
        <authorList>
            <person name="Nierman W.C."/>
            <person name="Feldblyum T.V."/>
            <person name="Laub M.T."/>
            <person name="Paulsen I.T."/>
            <person name="Nelson K.E."/>
            <person name="Eisen J.A."/>
            <person name="Heidelberg J.F."/>
            <person name="Alley M.R.K."/>
            <person name="Ohta N."/>
            <person name="Maddock J.R."/>
            <person name="Potocka I."/>
            <person name="Nelson W.C."/>
            <person name="Newton A."/>
            <person name="Stephens C."/>
            <person name="Phadke N.D."/>
            <person name="Ely B."/>
            <person name="DeBoy R.T."/>
            <person name="Dodson R.J."/>
            <person name="Durkin A.S."/>
            <person name="Gwinn M.L."/>
            <person name="Haft D.H."/>
            <person name="Kolonay J.F."/>
            <person name="Smit J."/>
            <person name="Craven M.B."/>
            <person name="Khouri H.M."/>
            <person name="Shetty J."/>
            <person name="Berry K.J."/>
            <person name="Utterback T.R."/>
            <person name="Tran K."/>
            <person name="Wolf A.M."/>
            <person name="Vamathevan J.J."/>
            <person name="Ermolaeva M.D."/>
            <person name="White O."/>
            <person name="Salzberg S.L."/>
            <person name="Venter J.C."/>
            <person name="Shapiro L."/>
            <person name="Fraser C.M."/>
        </authorList>
    </citation>
    <scope>NUCLEOTIDE SEQUENCE [LARGE SCALE GENOMIC DNA]</scope>
    <source>
        <strain>ATCC 19089 / CIP 103742 / CB 15</strain>
    </source>
</reference>
<organism>
    <name type="scientific">Caulobacter vibrioides (strain ATCC 19089 / CIP 103742 / CB 15)</name>
    <name type="common">Caulobacter crescentus</name>
    <dbReference type="NCBI Taxonomy" id="190650"/>
    <lineage>
        <taxon>Bacteria</taxon>
        <taxon>Pseudomonadati</taxon>
        <taxon>Pseudomonadota</taxon>
        <taxon>Alphaproteobacteria</taxon>
        <taxon>Caulobacterales</taxon>
        <taxon>Caulobacteraceae</taxon>
        <taxon>Caulobacter</taxon>
    </lineage>
</organism>